<dbReference type="PIR" id="S27039">
    <property type="entry name" value="S27039"/>
</dbReference>
<dbReference type="GO" id="GO:0005576">
    <property type="term" value="C:extracellular region"/>
    <property type="evidence" value="ECO:0007669"/>
    <property type="project" value="UniProtKB-SubCell"/>
</dbReference>
<dbReference type="GO" id="GO:0090729">
    <property type="term" value="F:toxin activity"/>
    <property type="evidence" value="ECO:0007669"/>
    <property type="project" value="UniProtKB-KW"/>
</dbReference>
<dbReference type="GO" id="GO:0019229">
    <property type="term" value="P:regulation of vasoconstriction"/>
    <property type="evidence" value="ECO:0007669"/>
    <property type="project" value="InterPro"/>
</dbReference>
<dbReference type="GO" id="GO:0042310">
    <property type="term" value="P:vasoconstriction"/>
    <property type="evidence" value="ECO:0007669"/>
    <property type="project" value="UniProtKB-KW"/>
</dbReference>
<dbReference type="InterPro" id="IPR019764">
    <property type="entry name" value="Endothelin_toxin_CS"/>
</dbReference>
<dbReference type="InterPro" id="IPR001928">
    <property type="entry name" value="Endothln-like_toxin"/>
</dbReference>
<dbReference type="Pfam" id="PF00322">
    <property type="entry name" value="Endothelin"/>
    <property type="match status" value="1"/>
</dbReference>
<dbReference type="SMART" id="SM00272">
    <property type="entry name" value="END"/>
    <property type="match status" value="1"/>
</dbReference>
<dbReference type="PROSITE" id="PS00270">
    <property type="entry name" value="ENDOTHELIN"/>
    <property type="match status" value="1"/>
</dbReference>
<comment type="function">
    <text evidence="2">Vasoconstrictor activity. These toxins cause cardiac arrest probably as a result of coronary vasospasm. May act by displaying agonistic activities towards endothelin-1 and -2 receptors (EDNRA and EDNRB).</text>
</comment>
<comment type="subcellular location">
    <subcellularLocation>
        <location>Secreted</location>
    </subcellularLocation>
</comment>
<comment type="tissue specificity">
    <text>Expressed by the venom gland.</text>
</comment>
<comment type="similarity">
    <text evidence="3">Belongs to the endothelin/sarafotoxin family.</text>
</comment>
<feature type="peptide" id="PRO_0000043645" description="Bibrotoxin">
    <location>
        <begin position="1"/>
        <end position="21"/>
    </location>
</feature>
<feature type="site" description="Endothelin-receptor binding site" evidence="1">
    <location>
        <position position="21"/>
    </location>
</feature>
<feature type="disulfide bond" evidence="1">
    <location>
        <begin position="1"/>
        <end position="15"/>
    </location>
</feature>
<feature type="disulfide bond" evidence="1">
    <location>
        <begin position="3"/>
        <end position="11"/>
    </location>
</feature>
<keyword id="KW-0123">Cardiotoxin</keyword>
<keyword id="KW-0903">Direct protein sequencing</keyword>
<keyword id="KW-1015">Disulfide bond</keyword>
<keyword id="KW-1213">G-protein coupled receptor impairing toxin</keyword>
<keyword id="KW-0964">Secreted</keyword>
<keyword id="KW-0800">Toxin</keyword>
<keyword id="KW-0838">Vasoactive</keyword>
<keyword id="KW-0839">Vasoconstrictor</keyword>
<sequence>CSCADMTDKECLYFCHQDVIW</sequence>
<reference key="1">
    <citation type="journal article" date="1993" name="FEBS Lett.">
        <title>Bibrotoxin, a novel member of the endothelin/sarafotoxin peptide family, from the venom of the burrowing asp Atractaspis bibroni.</title>
        <authorList>
            <person name="Becker A."/>
            <person name="Dowdle E.B."/>
            <person name="Hechler U."/>
            <person name="Kauser K."/>
            <person name="Donner P."/>
            <person name="Schleuning W.-D."/>
        </authorList>
    </citation>
    <scope>PROTEIN SEQUENCE</scope>
    <scope>FUNCTION</scope>
    <source>
        <tissue>Venom</tissue>
    </source>
</reference>
<accession>P80163</accession>
<name>SRTXB_ATRBI</name>
<proteinExistence type="evidence at protein level"/>
<organism>
    <name type="scientific">Atractaspis bibronii</name>
    <name type="common">Bibron's mole viper</name>
    <name type="synonym">Southern stiletto snake</name>
    <dbReference type="NCBI Taxonomy" id="61304"/>
    <lineage>
        <taxon>Eukaryota</taxon>
        <taxon>Metazoa</taxon>
        <taxon>Chordata</taxon>
        <taxon>Craniata</taxon>
        <taxon>Vertebrata</taxon>
        <taxon>Euteleostomi</taxon>
        <taxon>Lepidosauria</taxon>
        <taxon>Squamata</taxon>
        <taxon>Bifurcata</taxon>
        <taxon>Unidentata</taxon>
        <taxon>Episquamata</taxon>
        <taxon>Toxicofera</taxon>
        <taxon>Serpentes</taxon>
        <taxon>Colubroidea</taxon>
        <taxon>Lamprophiidae</taxon>
        <taxon>Atractaspidinae</taxon>
        <taxon>Atractaspis</taxon>
    </lineage>
</organism>
<evidence type="ECO:0000250" key="1"/>
<evidence type="ECO:0000269" key="2">
    <source>
    </source>
</evidence>
<evidence type="ECO:0000305" key="3"/>
<protein>
    <recommendedName>
        <fullName>Bibrotoxin</fullName>
        <shortName>BTX</shortName>
    </recommendedName>
</protein>